<sequence>MKNIFLTSESVTEGHPDKVCDQISDAILDAIIKEDKDARVACETCSTTGLVMVMGEITTTSYVDIRSIVRKTLAEIGYDNADYGIDARTCAIITSLEEQSKDIAQGVDESEEYKDNKSDEYDRYGAGDQGMVFGYATNETESGLPLPLELSHKLARRLATVRKEKILNYLRPDGKTQVTVEYENDAPKRIEAIVVSTQHDPDVDYEQLKEDIKREVILKIVDESMIDENTKFFINPTGKFVIGGPMGDAGLTGRKIIVDTYGGFCNHGGGAFSGKDPTKTDRSAAYFARYIAKNVVAAGLCDKCEVGFSYAIGVAKPISMFINTFGTNKIEEEKIIQAINENFDARPKAIIDKLDLQRPIYREVASYGHFGRNDLDLSWEKCDKAEALKKYL</sequence>
<reference key="1">
    <citation type="journal article" date="2008" name="DNA Res.">
        <title>Complete genome sequence of Finegoldia magna, an anaerobic opportunistic pathogen.</title>
        <authorList>
            <person name="Goto T."/>
            <person name="Yamashita A."/>
            <person name="Hirakawa H."/>
            <person name="Matsutani M."/>
            <person name="Todo K."/>
            <person name="Ohshima K."/>
            <person name="Toh H."/>
            <person name="Miyamoto K."/>
            <person name="Kuhara S."/>
            <person name="Hattori M."/>
            <person name="Shimizu T."/>
            <person name="Akimoto S."/>
        </authorList>
    </citation>
    <scope>NUCLEOTIDE SEQUENCE [LARGE SCALE GENOMIC DNA]</scope>
    <source>
        <strain>ATCC 29328 / DSM 20472 / WAL 2508</strain>
    </source>
</reference>
<feature type="chain" id="PRO_1000196714" description="S-adenosylmethionine synthase">
    <location>
        <begin position="1"/>
        <end position="392"/>
    </location>
</feature>
<feature type="region of interest" description="Flexible loop" evidence="1">
    <location>
        <begin position="99"/>
        <end position="109"/>
    </location>
</feature>
<feature type="binding site" description="in other chain" evidence="1">
    <location>
        <position position="15"/>
    </location>
    <ligand>
        <name>ATP</name>
        <dbReference type="ChEBI" id="CHEBI:30616"/>
        <note>ligand shared between two neighboring subunits</note>
    </ligand>
</feature>
<feature type="binding site" evidence="1">
    <location>
        <position position="17"/>
    </location>
    <ligand>
        <name>Mg(2+)</name>
        <dbReference type="ChEBI" id="CHEBI:18420"/>
    </ligand>
</feature>
<feature type="binding site" evidence="1">
    <location>
        <position position="43"/>
    </location>
    <ligand>
        <name>K(+)</name>
        <dbReference type="ChEBI" id="CHEBI:29103"/>
    </ligand>
</feature>
<feature type="binding site" description="in other chain" evidence="1">
    <location>
        <position position="56"/>
    </location>
    <ligand>
        <name>L-methionine</name>
        <dbReference type="ChEBI" id="CHEBI:57844"/>
        <note>ligand shared between two neighboring subunits</note>
    </ligand>
</feature>
<feature type="binding site" description="in other chain" evidence="1">
    <location>
        <position position="99"/>
    </location>
    <ligand>
        <name>L-methionine</name>
        <dbReference type="ChEBI" id="CHEBI:57844"/>
        <note>ligand shared between two neighboring subunits</note>
    </ligand>
</feature>
<feature type="binding site" description="in other chain" evidence="1">
    <location>
        <begin position="173"/>
        <end position="175"/>
    </location>
    <ligand>
        <name>ATP</name>
        <dbReference type="ChEBI" id="CHEBI:30616"/>
        <note>ligand shared between two neighboring subunits</note>
    </ligand>
</feature>
<feature type="binding site" description="in other chain" evidence="1">
    <location>
        <begin position="239"/>
        <end position="240"/>
    </location>
    <ligand>
        <name>ATP</name>
        <dbReference type="ChEBI" id="CHEBI:30616"/>
        <note>ligand shared between two neighboring subunits</note>
    </ligand>
</feature>
<feature type="binding site" evidence="1">
    <location>
        <position position="248"/>
    </location>
    <ligand>
        <name>ATP</name>
        <dbReference type="ChEBI" id="CHEBI:30616"/>
        <note>ligand shared between two neighboring subunits</note>
    </ligand>
</feature>
<feature type="binding site" evidence="1">
    <location>
        <position position="248"/>
    </location>
    <ligand>
        <name>L-methionine</name>
        <dbReference type="ChEBI" id="CHEBI:57844"/>
        <note>ligand shared between two neighboring subunits</note>
    </ligand>
</feature>
<feature type="binding site" description="in other chain" evidence="1">
    <location>
        <begin position="254"/>
        <end position="255"/>
    </location>
    <ligand>
        <name>ATP</name>
        <dbReference type="ChEBI" id="CHEBI:30616"/>
        <note>ligand shared between two neighboring subunits</note>
    </ligand>
</feature>
<feature type="binding site" evidence="1">
    <location>
        <position position="271"/>
    </location>
    <ligand>
        <name>ATP</name>
        <dbReference type="ChEBI" id="CHEBI:30616"/>
        <note>ligand shared between two neighboring subunits</note>
    </ligand>
</feature>
<feature type="binding site" evidence="1">
    <location>
        <position position="275"/>
    </location>
    <ligand>
        <name>ATP</name>
        <dbReference type="ChEBI" id="CHEBI:30616"/>
        <note>ligand shared between two neighboring subunits</note>
    </ligand>
</feature>
<feature type="binding site" description="in other chain" evidence="1">
    <location>
        <position position="279"/>
    </location>
    <ligand>
        <name>L-methionine</name>
        <dbReference type="ChEBI" id="CHEBI:57844"/>
        <note>ligand shared between two neighboring subunits</note>
    </ligand>
</feature>
<comment type="function">
    <text evidence="1">Catalyzes the formation of S-adenosylmethionine (AdoMet) from methionine and ATP. The overall synthetic reaction is composed of two sequential steps, AdoMet formation and the subsequent tripolyphosphate hydrolysis which occurs prior to release of AdoMet from the enzyme.</text>
</comment>
<comment type="catalytic activity">
    <reaction evidence="1">
        <text>L-methionine + ATP + H2O = S-adenosyl-L-methionine + phosphate + diphosphate</text>
        <dbReference type="Rhea" id="RHEA:21080"/>
        <dbReference type="ChEBI" id="CHEBI:15377"/>
        <dbReference type="ChEBI" id="CHEBI:30616"/>
        <dbReference type="ChEBI" id="CHEBI:33019"/>
        <dbReference type="ChEBI" id="CHEBI:43474"/>
        <dbReference type="ChEBI" id="CHEBI:57844"/>
        <dbReference type="ChEBI" id="CHEBI:59789"/>
        <dbReference type="EC" id="2.5.1.6"/>
    </reaction>
</comment>
<comment type="cofactor">
    <cofactor evidence="1">
        <name>Mg(2+)</name>
        <dbReference type="ChEBI" id="CHEBI:18420"/>
    </cofactor>
    <text evidence="1">Binds 2 divalent ions per subunit.</text>
</comment>
<comment type="cofactor">
    <cofactor evidence="1">
        <name>K(+)</name>
        <dbReference type="ChEBI" id="CHEBI:29103"/>
    </cofactor>
    <text evidence="1">Binds 1 potassium ion per subunit.</text>
</comment>
<comment type="pathway">
    <text evidence="1">Amino-acid biosynthesis; S-adenosyl-L-methionine biosynthesis; S-adenosyl-L-methionine from L-methionine: step 1/1.</text>
</comment>
<comment type="subunit">
    <text evidence="1">Homotetramer; dimer of dimers.</text>
</comment>
<comment type="subcellular location">
    <subcellularLocation>
        <location evidence="1">Cytoplasm</location>
    </subcellularLocation>
</comment>
<comment type="similarity">
    <text evidence="1">Belongs to the AdoMet synthase family.</text>
</comment>
<organism>
    <name type="scientific">Finegoldia magna (strain ATCC 29328 / DSM 20472 / WAL 2508)</name>
    <name type="common">Peptostreptococcus magnus</name>
    <dbReference type="NCBI Taxonomy" id="334413"/>
    <lineage>
        <taxon>Bacteria</taxon>
        <taxon>Bacillati</taxon>
        <taxon>Bacillota</taxon>
        <taxon>Tissierellia</taxon>
        <taxon>Tissierellales</taxon>
        <taxon>Peptoniphilaceae</taxon>
        <taxon>Finegoldia</taxon>
    </lineage>
</organism>
<protein>
    <recommendedName>
        <fullName evidence="1">S-adenosylmethionine synthase</fullName>
        <shortName evidence="1">AdoMet synthase</shortName>
        <ecNumber evidence="1">2.5.1.6</ecNumber>
    </recommendedName>
    <alternativeName>
        <fullName evidence="1">MAT</fullName>
    </alternativeName>
    <alternativeName>
        <fullName evidence="1">Methionine adenosyltransferase</fullName>
    </alternativeName>
</protein>
<evidence type="ECO:0000255" key="1">
    <source>
        <dbReference type="HAMAP-Rule" id="MF_00086"/>
    </source>
</evidence>
<accession>B0S2I6</accession>
<gene>
    <name evidence="1" type="primary">metK</name>
    <name type="ordered locus">FMG_1158</name>
</gene>
<dbReference type="EC" id="2.5.1.6" evidence="1"/>
<dbReference type="EMBL" id="AP008971">
    <property type="protein sequence ID" value="BAG08576.1"/>
    <property type="molecule type" value="Genomic_DNA"/>
</dbReference>
<dbReference type="RefSeq" id="WP_002839923.1">
    <property type="nucleotide sequence ID" value="NC_010376.1"/>
</dbReference>
<dbReference type="SMR" id="B0S2I6"/>
<dbReference type="STRING" id="334413.FMG_1158"/>
<dbReference type="KEGG" id="fma:FMG_1158"/>
<dbReference type="eggNOG" id="COG0192">
    <property type="taxonomic scope" value="Bacteria"/>
</dbReference>
<dbReference type="HOGENOM" id="CLU_041802_1_1_9"/>
<dbReference type="UniPathway" id="UPA00315">
    <property type="reaction ID" value="UER00080"/>
</dbReference>
<dbReference type="Proteomes" id="UP000001319">
    <property type="component" value="Chromosome"/>
</dbReference>
<dbReference type="GO" id="GO:0005737">
    <property type="term" value="C:cytoplasm"/>
    <property type="evidence" value="ECO:0007669"/>
    <property type="project" value="UniProtKB-SubCell"/>
</dbReference>
<dbReference type="GO" id="GO:0005524">
    <property type="term" value="F:ATP binding"/>
    <property type="evidence" value="ECO:0007669"/>
    <property type="project" value="UniProtKB-UniRule"/>
</dbReference>
<dbReference type="GO" id="GO:0000287">
    <property type="term" value="F:magnesium ion binding"/>
    <property type="evidence" value="ECO:0007669"/>
    <property type="project" value="UniProtKB-UniRule"/>
</dbReference>
<dbReference type="GO" id="GO:0004478">
    <property type="term" value="F:methionine adenosyltransferase activity"/>
    <property type="evidence" value="ECO:0007669"/>
    <property type="project" value="UniProtKB-UniRule"/>
</dbReference>
<dbReference type="GO" id="GO:0006730">
    <property type="term" value="P:one-carbon metabolic process"/>
    <property type="evidence" value="ECO:0007669"/>
    <property type="project" value="UniProtKB-KW"/>
</dbReference>
<dbReference type="GO" id="GO:0006556">
    <property type="term" value="P:S-adenosylmethionine biosynthetic process"/>
    <property type="evidence" value="ECO:0007669"/>
    <property type="project" value="UniProtKB-UniRule"/>
</dbReference>
<dbReference type="CDD" id="cd18079">
    <property type="entry name" value="S-AdoMet_synt"/>
    <property type="match status" value="1"/>
</dbReference>
<dbReference type="FunFam" id="3.30.300.10:FF:000003">
    <property type="entry name" value="S-adenosylmethionine synthase"/>
    <property type="match status" value="1"/>
</dbReference>
<dbReference type="Gene3D" id="3.30.300.10">
    <property type="match status" value="3"/>
</dbReference>
<dbReference type="HAMAP" id="MF_00086">
    <property type="entry name" value="S_AdoMet_synth1"/>
    <property type="match status" value="1"/>
</dbReference>
<dbReference type="InterPro" id="IPR022631">
    <property type="entry name" value="ADOMET_SYNTHASE_CS"/>
</dbReference>
<dbReference type="InterPro" id="IPR022630">
    <property type="entry name" value="S-AdoMet_synt_C"/>
</dbReference>
<dbReference type="InterPro" id="IPR022629">
    <property type="entry name" value="S-AdoMet_synt_central"/>
</dbReference>
<dbReference type="InterPro" id="IPR022628">
    <property type="entry name" value="S-AdoMet_synt_N"/>
</dbReference>
<dbReference type="InterPro" id="IPR002133">
    <property type="entry name" value="S-AdoMet_synthetase"/>
</dbReference>
<dbReference type="InterPro" id="IPR022636">
    <property type="entry name" value="S-AdoMet_synthetase_sfam"/>
</dbReference>
<dbReference type="NCBIfam" id="TIGR01034">
    <property type="entry name" value="metK"/>
    <property type="match status" value="1"/>
</dbReference>
<dbReference type="PANTHER" id="PTHR11964">
    <property type="entry name" value="S-ADENOSYLMETHIONINE SYNTHETASE"/>
    <property type="match status" value="1"/>
</dbReference>
<dbReference type="Pfam" id="PF02773">
    <property type="entry name" value="S-AdoMet_synt_C"/>
    <property type="match status" value="1"/>
</dbReference>
<dbReference type="Pfam" id="PF02772">
    <property type="entry name" value="S-AdoMet_synt_M"/>
    <property type="match status" value="1"/>
</dbReference>
<dbReference type="Pfam" id="PF00438">
    <property type="entry name" value="S-AdoMet_synt_N"/>
    <property type="match status" value="1"/>
</dbReference>
<dbReference type="PIRSF" id="PIRSF000497">
    <property type="entry name" value="MAT"/>
    <property type="match status" value="1"/>
</dbReference>
<dbReference type="SUPFAM" id="SSF55973">
    <property type="entry name" value="S-adenosylmethionine synthetase"/>
    <property type="match status" value="3"/>
</dbReference>
<dbReference type="PROSITE" id="PS00376">
    <property type="entry name" value="ADOMET_SYNTHASE_1"/>
    <property type="match status" value="1"/>
</dbReference>
<dbReference type="PROSITE" id="PS00377">
    <property type="entry name" value="ADOMET_SYNTHASE_2"/>
    <property type="match status" value="1"/>
</dbReference>
<name>METK_FINM2</name>
<keyword id="KW-0067">ATP-binding</keyword>
<keyword id="KW-0963">Cytoplasm</keyword>
<keyword id="KW-0460">Magnesium</keyword>
<keyword id="KW-0479">Metal-binding</keyword>
<keyword id="KW-0547">Nucleotide-binding</keyword>
<keyword id="KW-0554">One-carbon metabolism</keyword>
<keyword id="KW-0630">Potassium</keyword>
<keyword id="KW-1185">Reference proteome</keyword>
<keyword id="KW-0808">Transferase</keyword>
<proteinExistence type="inferred from homology"/>